<protein>
    <recommendedName>
        <fullName evidence="1">NADH-quinone oxidoreductase subunit D</fullName>
        <ecNumber evidence="1">7.1.1.-</ecNumber>
    </recommendedName>
    <alternativeName>
        <fullName evidence="1">NADH dehydrogenase I subunit D</fullName>
    </alternativeName>
    <alternativeName>
        <fullName evidence="1">NDH-1 subunit D</fullName>
    </alternativeName>
</protein>
<dbReference type="EC" id="7.1.1.-" evidence="1"/>
<dbReference type="EMBL" id="CR555306">
    <property type="protein sequence ID" value="CAI08867.1"/>
    <property type="molecule type" value="Genomic_DNA"/>
</dbReference>
<dbReference type="RefSeq" id="WP_011238550.1">
    <property type="nucleotide sequence ID" value="NC_006513.1"/>
</dbReference>
<dbReference type="SMR" id="Q5P1E7"/>
<dbReference type="STRING" id="76114.ebA4837"/>
<dbReference type="KEGG" id="eba:ebA4837"/>
<dbReference type="eggNOG" id="COG0649">
    <property type="taxonomic scope" value="Bacteria"/>
</dbReference>
<dbReference type="HOGENOM" id="CLU_015134_1_1_4"/>
<dbReference type="OrthoDB" id="9801496at2"/>
<dbReference type="Proteomes" id="UP000006552">
    <property type="component" value="Chromosome"/>
</dbReference>
<dbReference type="GO" id="GO:0005886">
    <property type="term" value="C:plasma membrane"/>
    <property type="evidence" value="ECO:0007669"/>
    <property type="project" value="UniProtKB-SubCell"/>
</dbReference>
<dbReference type="GO" id="GO:0051287">
    <property type="term" value="F:NAD binding"/>
    <property type="evidence" value="ECO:0007669"/>
    <property type="project" value="InterPro"/>
</dbReference>
<dbReference type="GO" id="GO:0050136">
    <property type="term" value="F:NADH:ubiquinone reductase (non-electrogenic) activity"/>
    <property type="evidence" value="ECO:0007669"/>
    <property type="project" value="UniProtKB-UniRule"/>
</dbReference>
<dbReference type="GO" id="GO:0048038">
    <property type="term" value="F:quinone binding"/>
    <property type="evidence" value="ECO:0007669"/>
    <property type="project" value="UniProtKB-KW"/>
</dbReference>
<dbReference type="FunFam" id="1.10.645.10:FF:000005">
    <property type="entry name" value="NADH-quinone oxidoreductase subunit D"/>
    <property type="match status" value="1"/>
</dbReference>
<dbReference type="Gene3D" id="1.10.645.10">
    <property type="entry name" value="Cytochrome-c3 Hydrogenase, chain B"/>
    <property type="match status" value="1"/>
</dbReference>
<dbReference type="HAMAP" id="MF_01358">
    <property type="entry name" value="NDH1_NuoD"/>
    <property type="match status" value="1"/>
</dbReference>
<dbReference type="InterPro" id="IPR001135">
    <property type="entry name" value="NADH_Q_OxRdtase_suD"/>
</dbReference>
<dbReference type="InterPro" id="IPR014029">
    <property type="entry name" value="NADH_UbQ_OxRdtase_49kDa_CS"/>
</dbReference>
<dbReference type="InterPro" id="IPR022885">
    <property type="entry name" value="NDH1_su_D/H"/>
</dbReference>
<dbReference type="InterPro" id="IPR029014">
    <property type="entry name" value="NiFe-Hase_large"/>
</dbReference>
<dbReference type="NCBIfam" id="TIGR01962">
    <property type="entry name" value="NuoD"/>
    <property type="match status" value="1"/>
</dbReference>
<dbReference type="NCBIfam" id="NF004739">
    <property type="entry name" value="PRK06075.1"/>
    <property type="match status" value="1"/>
</dbReference>
<dbReference type="PANTHER" id="PTHR11993:SF10">
    <property type="entry name" value="NADH DEHYDROGENASE [UBIQUINONE] IRON-SULFUR PROTEIN 2, MITOCHONDRIAL"/>
    <property type="match status" value="1"/>
</dbReference>
<dbReference type="PANTHER" id="PTHR11993">
    <property type="entry name" value="NADH-UBIQUINONE OXIDOREDUCTASE 49 KDA SUBUNIT"/>
    <property type="match status" value="1"/>
</dbReference>
<dbReference type="Pfam" id="PF00346">
    <property type="entry name" value="Complex1_49kDa"/>
    <property type="match status" value="1"/>
</dbReference>
<dbReference type="SUPFAM" id="SSF56762">
    <property type="entry name" value="HydB/Nqo4-like"/>
    <property type="match status" value="1"/>
</dbReference>
<dbReference type="PROSITE" id="PS00535">
    <property type="entry name" value="COMPLEX1_49K"/>
    <property type="match status" value="1"/>
</dbReference>
<reference key="1">
    <citation type="journal article" date="2005" name="Arch. Microbiol.">
        <title>The genome sequence of an anaerobic aromatic-degrading denitrifying bacterium, strain EbN1.</title>
        <authorList>
            <person name="Rabus R."/>
            <person name="Kube M."/>
            <person name="Heider J."/>
            <person name="Beck A."/>
            <person name="Heitmann K."/>
            <person name="Widdel F."/>
            <person name="Reinhardt R."/>
        </authorList>
    </citation>
    <scope>NUCLEOTIDE SEQUENCE [LARGE SCALE GENOMIC DNA]</scope>
    <source>
        <strain>DSM 19018 / LMG 30748 / EbN1</strain>
    </source>
</reference>
<comment type="function">
    <text evidence="1">NDH-1 shuttles electrons from NADH, via FMN and iron-sulfur (Fe-S) centers, to quinones in the respiratory chain. The immediate electron acceptor for the enzyme in this species is believed to be ubiquinone. Couples the redox reaction to proton translocation (for every two electrons transferred, four hydrogen ions are translocated across the cytoplasmic membrane), and thus conserves the redox energy in a proton gradient.</text>
</comment>
<comment type="catalytic activity">
    <reaction evidence="1">
        <text>a quinone + NADH + 5 H(+)(in) = a quinol + NAD(+) + 4 H(+)(out)</text>
        <dbReference type="Rhea" id="RHEA:57888"/>
        <dbReference type="ChEBI" id="CHEBI:15378"/>
        <dbReference type="ChEBI" id="CHEBI:24646"/>
        <dbReference type="ChEBI" id="CHEBI:57540"/>
        <dbReference type="ChEBI" id="CHEBI:57945"/>
        <dbReference type="ChEBI" id="CHEBI:132124"/>
    </reaction>
</comment>
<comment type="subunit">
    <text evidence="1">NDH-1 is composed of 14 different subunits. Subunits NuoB, C, D, E, F, and G constitute the peripheral sector of the complex.</text>
</comment>
<comment type="subcellular location">
    <subcellularLocation>
        <location evidence="1">Cell inner membrane</location>
        <topology evidence="1">Peripheral membrane protein</topology>
        <orientation evidence="1">Cytoplasmic side</orientation>
    </subcellularLocation>
</comment>
<comment type="similarity">
    <text evidence="1">Belongs to the complex I 49 kDa subunit family.</text>
</comment>
<name>NUOD_AROAE</name>
<keyword id="KW-0997">Cell inner membrane</keyword>
<keyword id="KW-1003">Cell membrane</keyword>
<keyword id="KW-0472">Membrane</keyword>
<keyword id="KW-0520">NAD</keyword>
<keyword id="KW-0874">Quinone</keyword>
<keyword id="KW-1185">Reference proteome</keyword>
<keyword id="KW-1278">Translocase</keyword>
<keyword id="KW-0813">Transport</keyword>
<keyword id="KW-0830">Ubiquinone</keyword>
<feature type="chain" id="PRO_0000357761" description="NADH-quinone oxidoreductase subunit D">
    <location>
        <begin position="1"/>
        <end position="417"/>
    </location>
</feature>
<proteinExistence type="inferred from homology"/>
<evidence type="ECO:0000255" key="1">
    <source>
        <dbReference type="HAMAP-Rule" id="MF_01358"/>
    </source>
</evidence>
<sequence>MAEIRNYTINFGPQHPSAHGVLRLVLELDGEVVVRADPHIGLLHRGTEKLAETRTWVQSVPYMDRLDYVSMMCNEHAYCLAIERLLGLEVPIRAQYIRVMFDEITRILNHLLGIGTHALDIGAMTMVLYTFREREDLMDAYEAVSGARMHAAYYRPGGVYRDLPDRMPQYVVNKFKNANTVRELNENRQGSLLDFLEDFTERFNGYCDDYETLLTDNRIWKQRTVGIGVVTPEQAKAWGFTGPMLRGSGVAWDLRKKQPYEVYDRMDFDIPVGKNGDCYDRYLCRMEEMRQSNRIVKQCIDWLRKNPGPVIADNYKVAPPPRERMKGNMEELIHHFKLFTEGMHVPSGEVYAAIEHPKGEFGVYAVSDGANKPYRLKLRAPGFAHLAAMDEIARGHMIADVVAIIGTMDVVFGEIDR</sequence>
<organism>
    <name type="scientific">Aromatoleum aromaticum (strain DSM 19018 / LMG 30748 / EbN1)</name>
    <name type="common">Azoarcus sp. (strain EbN1)</name>
    <dbReference type="NCBI Taxonomy" id="76114"/>
    <lineage>
        <taxon>Bacteria</taxon>
        <taxon>Pseudomonadati</taxon>
        <taxon>Pseudomonadota</taxon>
        <taxon>Betaproteobacteria</taxon>
        <taxon>Rhodocyclales</taxon>
        <taxon>Rhodocyclaceae</taxon>
        <taxon>Aromatoleum</taxon>
    </lineage>
</organism>
<accession>Q5P1E7</accession>
<gene>
    <name evidence="1" type="primary">nuoD</name>
    <name type="ordered locus">AZOSEA27420</name>
    <name type="ORF">ebA4837</name>
</gene>